<name>MRH5_SCHPO</name>
<evidence type="ECO:0000255" key="1">
    <source>
        <dbReference type="PROSITE-ProRule" id="PRU00541"/>
    </source>
</evidence>
<evidence type="ECO:0000255" key="2">
    <source>
        <dbReference type="PROSITE-ProRule" id="PRU00542"/>
    </source>
</evidence>
<evidence type="ECO:0000269" key="3">
    <source>
    </source>
</evidence>
<evidence type="ECO:0000269" key="4">
    <source>
    </source>
</evidence>
<evidence type="ECO:0000269" key="5">
    <source>
    </source>
</evidence>
<evidence type="ECO:0000305" key="6"/>
<evidence type="ECO:0000312" key="7">
    <source>
        <dbReference type="PomBase" id="SPBC25D12.06"/>
    </source>
</evidence>
<feature type="chain" id="PRO_0000351075" description="Mitochondrial translation ATP-dependent RNA helicase mrh5">
    <location>
        <begin position="1"/>
        <end position="585"/>
    </location>
</feature>
<feature type="domain" description="Helicase ATP-binding" evidence="1">
    <location>
        <begin position="121"/>
        <end position="351"/>
    </location>
</feature>
<feature type="domain" description="Helicase C-terminal" evidence="2">
    <location>
        <begin position="390"/>
        <end position="584"/>
    </location>
</feature>
<feature type="short sequence motif" description="Q motif">
    <location>
        <begin position="87"/>
        <end position="117"/>
    </location>
</feature>
<feature type="short sequence motif" description="DEAD box">
    <location>
        <begin position="261"/>
        <end position="264"/>
    </location>
</feature>
<feature type="binding site" evidence="1">
    <location>
        <begin position="134"/>
        <end position="141"/>
    </location>
    <ligand>
        <name>ATP</name>
        <dbReference type="ChEBI" id="CHEBI:30616"/>
    </ligand>
</feature>
<feature type="mutagenesis site" description="Strongly decreases cox1 and cox2 protein level." evidence="4">
    <original>G</original>
    <variation>E</variation>
    <location>
        <position position="230"/>
    </location>
</feature>
<feature type="mutagenesis site" description="Abolishes its assembly into the MRH5C complex and impairs interaction with the mitochondrial small ribosomal subunit, and the interaction between cox1 and the mitochondrial small ribosomal subunit. Decreases cox1 mRNA level and the protein level of several mtDNA-encoded products. Impairs growth on the respiratory carbon source glycerol." evidence="5">
    <original>D</original>
    <variation>A</variation>
    <location>
        <position position="261"/>
    </location>
</feature>
<feature type="mutagenesis site" description="Abolishes its assembly into the MRH5C complex and impairs interaction with the mitochondrial small ribosomal subunit. Decreases cox1 mRNA level and the protein level of several mtDNA-encoded products. Impairs growth on the respiratory carbon source glycerol." evidence="5">
    <original>E</original>
    <variation>A</variation>
    <location>
        <position position="262"/>
    </location>
</feature>
<protein>
    <recommendedName>
        <fullName evidence="7">Mitochondrial translation ATP-dependent RNA helicase mrh5</fullName>
        <ecNumber>3.6.4.13</ecNumber>
    </recommendedName>
</protein>
<dbReference type="EC" id="3.6.4.13"/>
<dbReference type="EMBL" id="CU329671">
    <property type="protein sequence ID" value="CAA20102.2"/>
    <property type="molecule type" value="Genomic_DNA"/>
</dbReference>
<dbReference type="PIR" id="T39994">
    <property type="entry name" value="T39994"/>
</dbReference>
<dbReference type="RefSeq" id="NP_596548.2">
    <property type="nucleotide sequence ID" value="NM_001022469.2"/>
</dbReference>
<dbReference type="BioGRID" id="276932">
    <property type="interactions" value="1"/>
</dbReference>
<dbReference type="ComplexPortal" id="CPX-25771">
    <property type="entry name" value="MRH5C complex"/>
</dbReference>
<dbReference type="FunCoup" id="O74356">
    <property type="interactions" value="87"/>
</dbReference>
<dbReference type="STRING" id="284812.O74356"/>
<dbReference type="PaxDb" id="4896-SPBC25D12.06.1"/>
<dbReference type="EnsemblFungi" id="SPBC25D12.06.1">
    <property type="protein sequence ID" value="SPBC25D12.06.1:pep"/>
    <property type="gene ID" value="SPBC25D12.06"/>
</dbReference>
<dbReference type="GeneID" id="2540404"/>
<dbReference type="KEGG" id="spo:2540404"/>
<dbReference type="PomBase" id="SPBC25D12.06">
    <property type="gene designation" value="mrh5"/>
</dbReference>
<dbReference type="VEuPathDB" id="FungiDB:SPBC25D12.06"/>
<dbReference type="eggNOG" id="KOG0327">
    <property type="taxonomic scope" value="Eukaryota"/>
</dbReference>
<dbReference type="HOGENOM" id="CLU_467811_0_0_1"/>
<dbReference type="InParanoid" id="O74356"/>
<dbReference type="OMA" id="PCADYVG"/>
<dbReference type="PRO" id="PR:O74356"/>
<dbReference type="Proteomes" id="UP000002485">
    <property type="component" value="Chromosome II"/>
</dbReference>
<dbReference type="GO" id="GO:0005739">
    <property type="term" value="C:mitochondrion"/>
    <property type="evidence" value="ECO:0000314"/>
    <property type="project" value="UniProtKB"/>
</dbReference>
<dbReference type="GO" id="GO:0005730">
    <property type="term" value="C:nucleolus"/>
    <property type="evidence" value="ECO:0000318"/>
    <property type="project" value="GO_Central"/>
</dbReference>
<dbReference type="GO" id="GO:0005524">
    <property type="term" value="F:ATP binding"/>
    <property type="evidence" value="ECO:0000255"/>
    <property type="project" value="PomBase"/>
</dbReference>
<dbReference type="GO" id="GO:0016887">
    <property type="term" value="F:ATP hydrolysis activity"/>
    <property type="evidence" value="ECO:0007669"/>
    <property type="project" value="RHEA"/>
</dbReference>
<dbReference type="GO" id="GO:0003676">
    <property type="term" value="F:nucleic acid binding"/>
    <property type="evidence" value="ECO:0007669"/>
    <property type="project" value="InterPro"/>
</dbReference>
<dbReference type="GO" id="GO:0003724">
    <property type="term" value="F:RNA helicase activity"/>
    <property type="evidence" value="ECO:0000303"/>
    <property type="project" value="PomBase"/>
</dbReference>
<dbReference type="GO" id="GO:0045182">
    <property type="term" value="F:translation regulator activity"/>
    <property type="evidence" value="ECO:0000315"/>
    <property type="project" value="UniProtKB"/>
</dbReference>
<dbReference type="GO" id="GO:0032543">
    <property type="term" value="P:mitochondrial translation"/>
    <property type="evidence" value="ECO:0000269"/>
    <property type="project" value="PomBase"/>
</dbReference>
<dbReference type="GO" id="GO:0070124">
    <property type="term" value="P:mitochondrial translational initiation"/>
    <property type="evidence" value="ECO:0000315"/>
    <property type="project" value="UniProtKB"/>
</dbReference>
<dbReference type="Gene3D" id="3.40.50.300">
    <property type="entry name" value="P-loop containing nucleotide triphosphate hydrolases"/>
    <property type="match status" value="1"/>
</dbReference>
<dbReference type="InterPro" id="IPR011545">
    <property type="entry name" value="DEAD/DEAH_box_helicase_dom"/>
</dbReference>
<dbReference type="InterPro" id="IPR014001">
    <property type="entry name" value="Helicase_ATP-bd"/>
</dbReference>
<dbReference type="InterPro" id="IPR027417">
    <property type="entry name" value="P-loop_NTPase"/>
</dbReference>
<dbReference type="PANTHER" id="PTHR24031">
    <property type="entry name" value="RNA HELICASE"/>
    <property type="match status" value="1"/>
</dbReference>
<dbReference type="Pfam" id="PF00270">
    <property type="entry name" value="DEAD"/>
    <property type="match status" value="1"/>
</dbReference>
<dbReference type="SMART" id="SM00487">
    <property type="entry name" value="DEXDc"/>
    <property type="match status" value="1"/>
</dbReference>
<dbReference type="SUPFAM" id="SSF52540">
    <property type="entry name" value="P-loop containing nucleoside triphosphate hydrolases"/>
    <property type="match status" value="1"/>
</dbReference>
<dbReference type="PROSITE" id="PS51192">
    <property type="entry name" value="HELICASE_ATP_BIND_1"/>
    <property type="match status" value="1"/>
</dbReference>
<dbReference type="PROSITE" id="PS51194">
    <property type="entry name" value="HELICASE_CTER"/>
    <property type="match status" value="1"/>
</dbReference>
<dbReference type="PROSITE" id="PS51195">
    <property type="entry name" value="Q_MOTIF"/>
    <property type="match status" value="1"/>
</dbReference>
<proteinExistence type="evidence at protein level"/>
<keyword id="KW-0010">Activator</keyword>
<keyword id="KW-0067">ATP-binding</keyword>
<keyword id="KW-0347">Helicase</keyword>
<keyword id="KW-0378">Hydrolase</keyword>
<keyword id="KW-0496">Mitochondrion</keyword>
<keyword id="KW-0547">Nucleotide-binding</keyword>
<keyword id="KW-1185">Reference proteome</keyword>
<keyword id="KW-0810">Translation regulation</keyword>
<comment type="function">
    <text evidence="4 5">Translation activation factor that as part of the MRH5C complex specifically recruits cox1 mRNA to the mitochondrial ribosome for translation initiation.</text>
</comment>
<comment type="catalytic activity">
    <reaction>
        <text>ATP + H2O = ADP + phosphate + H(+)</text>
        <dbReference type="Rhea" id="RHEA:13065"/>
        <dbReference type="ChEBI" id="CHEBI:15377"/>
        <dbReference type="ChEBI" id="CHEBI:15378"/>
        <dbReference type="ChEBI" id="CHEBI:30616"/>
        <dbReference type="ChEBI" id="CHEBI:43474"/>
        <dbReference type="ChEBI" id="CHEBI:456216"/>
        <dbReference type="EC" id="3.6.4.13"/>
    </reaction>
</comment>
<comment type="subunit">
    <text evidence="4 5">Component of the MRH5C complex, composed of mrh5, ppr4, mtf2, and sls1 (PubMed:34634819, PubMed:38499152). Proteins mtf2 and sls1 form a subcomplex that serves as a scaffold to bring mrh5 and ppr4 together (PubMed:38499152). The MRH5C complex associates with the small subunit of the mitochondrial ribosome (PubMed:34634819, PubMed:38499152).</text>
</comment>
<comment type="subcellular location">
    <subcellularLocation>
        <location evidence="3 4">Mitochondrion</location>
    </subcellularLocation>
</comment>
<comment type="disruption phenotype">
    <text evidence="4 5">Decreases the association of cox1, but not cob1, mRNA with the mitochondrial small ribosomal subunit (PubMed:38499152). Decreases protein level of mitochondrial translation factor mtf2 (PubMed:38499152). Strongly decreases the protein level of several mtDNA-encoded products, including cox1 and cox2 (PubMed:38499152). Impairs growth on the respiratory carbon source glycerol (PubMed:34634819, PubMed:38499152).</text>
</comment>
<comment type="similarity">
    <text evidence="6">Belongs to the DEAD box helicase family.</text>
</comment>
<accession>O74356</accession>
<reference key="1">
    <citation type="journal article" date="2002" name="Nature">
        <title>The genome sequence of Schizosaccharomyces pombe.</title>
        <authorList>
            <person name="Wood V."/>
            <person name="Gwilliam R."/>
            <person name="Rajandream M.A."/>
            <person name="Lyne M.H."/>
            <person name="Lyne R."/>
            <person name="Stewart A."/>
            <person name="Sgouros J.G."/>
            <person name="Peat N."/>
            <person name="Hayles J."/>
            <person name="Baker S.G."/>
            <person name="Basham D."/>
            <person name="Bowman S."/>
            <person name="Brooks K."/>
            <person name="Brown D."/>
            <person name="Brown S."/>
            <person name="Chillingworth T."/>
            <person name="Churcher C.M."/>
            <person name="Collins M."/>
            <person name="Connor R."/>
            <person name="Cronin A."/>
            <person name="Davis P."/>
            <person name="Feltwell T."/>
            <person name="Fraser A."/>
            <person name="Gentles S."/>
            <person name="Goble A."/>
            <person name="Hamlin N."/>
            <person name="Harris D.E."/>
            <person name="Hidalgo J."/>
            <person name="Hodgson G."/>
            <person name="Holroyd S."/>
            <person name="Hornsby T."/>
            <person name="Howarth S."/>
            <person name="Huckle E.J."/>
            <person name="Hunt S."/>
            <person name="Jagels K."/>
            <person name="James K.D."/>
            <person name="Jones L."/>
            <person name="Jones M."/>
            <person name="Leather S."/>
            <person name="McDonald S."/>
            <person name="McLean J."/>
            <person name="Mooney P."/>
            <person name="Moule S."/>
            <person name="Mungall K.L."/>
            <person name="Murphy L.D."/>
            <person name="Niblett D."/>
            <person name="Odell C."/>
            <person name="Oliver K."/>
            <person name="O'Neil S."/>
            <person name="Pearson D."/>
            <person name="Quail M.A."/>
            <person name="Rabbinowitsch E."/>
            <person name="Rutherford K.M."/>
            <person name="Rutter S."/>
            <person name="Saunders D."/>
            <person name="Seeger K."/>
            <person name="Sharp S."/>
            <person name="Skelton J."/>
            <person name="Simmonds M.N."/>
            <person name="Squares R."/>
            <person name="Squares S."/>
            <person name="Stevens K."/>
            <person name="Taylor K."/>
            <person name="Taylor R.G."/>
            <person name="Tivey A."/>
            <person name="Walsh S.V."/>
            <person name="Warren T."/>
            <person name="Whitehead S."/>
            <person name="Woodward J.R."/>
            <person name="Volckaert G."/>
            <person name="Aert R."/>
            <person name="Robben J."/>
            <person name="Grymonprez B."/>
            <person name="Weltjens I."/>
            <person name="Vanstreels E."/>
            <person name="Rieger M."/>
            <person name="Schaefer M."/>
            <person name="Mueller-Auer S."/>
            <person name="Gabel C."/>
            <person name="Fuchs M."/>
            <person name="Duesterhoeft A."/>
            <person name="Fritzc C."/>
            <person name="Holzer E."/>
            <person name="Moestl D."/>
            <person name="Hilbert H."/>
            <person name="Borzym K."/>
            <person name="Langer I."/>
            <person name="Beck A."/>
            <person name="Lehrach H."/>
            <person name="Reinhardt R."/>
            <person name="Pohl T.M."/>
            <person name="Eger P."/>
            <person name="Zimmermann W."/>
            <person name="Wedler H."/>
            <person name="Wambutt R."/>
            <person name="Purnelle B."/>
            <person name="Goffeau A."/>
            <person name="Cadieu E."/>
            <person name="Dreano S."/>
            <person name="Gloux S."/>
            <person name="Lelaure V."/>
            <person name="Mottier S."/>
            <person name="Galibert F."/>
            <person name="Aves S.J."/>
            <person name="Xiang Z."/>
            <person name="Hunt C."/>
            <person name="Moore K."/>
            <person name="Hurst S.M."/>
            <person name="Lucas M."/>
            <person name="Rochet M."/>
            <person name="Gaillardin C."/>
            <person name="Tallada V.A."/>
            <person name="Garzon A."/>
            <person name="Thode G."/>
            <person name="Daga R.R."/>
            <person name="Cruzado L."/>
            <person name="Jimenez J."/>
            <person name="Sanchez M."/>
            <person name="del Rey F."/>
            <person name="Benito J."/>
            <person name="Dominguez A."/>
            <person name="Revuelta J.L."/>
            <person name="Moreno S."/>
            <person name="Armstrong J."/>
            <person name="Forsburg S.L."/>
            <person name="Cerutti L."/>
            <person name="Lowe T."/>
            <person name="McCombie W.R."/>
            <person name="Paulsen I."/>
            <person name="Potashkin J."/>
            <person name="Shpakovski G.V."/>
            <person name="Ussery D."/>
            <person name="Barrell B.G."/>
            <person name="Nurse P."/>
        </authorList>
    </citation>
    <scope>NUCLEOTIDE SEQUENCE [LARGE SCALE GENOMIC DNA]</scope>
    <source>
        <strain>972 / ATCC 24843</strain>
    </source>
</reference>
<reference key="2">
    <citation type="journal article" date="2011" name="Science">
        <title>Comparative functional genomics of the fission yeasts.</title>
        <authorList>
            <person name="Rhind N."/>
            <person name="Chen Z."/>
            <person name="Yassour M."/>
            <person name="Thompson D.A."/>
            <person name="Haas B.J."/>
            <person name="Habib N."/>
            <person name="Wapinski I."/>
            <person name="Roy S."/>
            <person name="Lin M.F."/>
            <person name="Heiman D.I."/>
            <person name="Young S.K."/>
            <person name="Furuya K."/>
            <person name="Guo Y."/>
            <person name="Pidoux A."/>
            <person name="Chen H.M."/>
            <person name="Robbertse B."/>
            <person name="Goldberg J.M."/>
            <person name="Aoki K."/>
            <person name="Bayne E.H."/>
            <person name="Berlin A.M."/>
            <person name="Desjardins C.A."/>
            <person name="Dobbs E."/>
            <person name="Dukaj L."/>
            <person name="Fan L."/>
            <person name="FitzGerald M.G."/>
            <person name="French C."/>
            <person name="Gujja S."/>
            <person name="Hansen K."/>
            <person name="Keifenheim D."/>
            <person name="Levin J.Z."/>
            <person name="Mosher R.A."/>
            <person name="Mueller C.A."/>
            <person name="Pfiffner J."/>
            <person name="Priest M."/>
            <person name="Russ C."/>
            <person name="Smialowska A."/>
            <person name="Swoboda P."/>
            <person name="Sykes S.M."/>
            <person name="Vaughn M."/>
            <person name="Vengrova S."/>
            <person name="Yoder R."/>
            <person name="Zeng Q."/>
            <person name="Allshire R."/>
            <person name="Baulcombe D."/>
            <person name="Birren B.W."/>
            <person name="Brown W."/>
            <person name="Ekwall K."/>
            <person name="Kellis M."/>
            <person name="Leatherwood J."/>
            <person name="Levin H."/>
            <person name="Margalit H."/>
            <person name="Martienssen R."/>
            <person name="Nieduszynski C.A."/>
            <person name="Spatafora J.W."/>
            <person name="Friedman N."/>
            <person name="Dalgaard J.Z."/>
            <person name="Baumann P."/>
            <person name="Niki H."/>
            <person name="Regev A."/>
            <person name="Nusbaum C."/>
        </authorList>
    </citation>
    <scope>REVISION OF GENE MODEL</scope>
</reference>
<reference key="3">
    <citation type="journal article" date="2006" name="Nat. Biotechnol.">
        <title>ORFeome cloning and global analysis of protein localization in the fission yeast Schizosaccharomyces pombe.</title>
        <authorList>
            <person name="Matsuyama A."/>
            <person name="Arai R."/>
            <person name="Yashiroda Y."/>
            <person name="Shirai A."/>
            <person name="Kamata A."/>
            <person name="Sekido S."/>
            <person name="Kobayashi Y."/>
            <person name="Hashimoto A."/>
            <person name="Hamamoto M."/>
            <person name="Hiraoka Y."/>
            <person name="Horinouchi S."/>
            <person name="Yoshida M."/>
        </authorList>
    </citation>
    <scope>SUBCELLULAR LOCATION [LARGE SCALE ANALYSIS]</scope>
</reference>
<reference key="4">
    <citation type="journal article" date="2021" name="Nucleic Acids Res.">
        <title>Translational activators and mitoribosomal isoforms cooperate to mediate mRNA-specific translation in Schizosaccharomyces pombe mitochondria.</title>
        <authorList>
            <person name="Herbert C.J."/>
            <person name="Labarre-Mariotte S."/>
            <person name="Cornu D."/>
            <person name="Sophie C."/>
            <person name="Panozzo C."/>
            <person name="Michel T."/>
            <person name="Dujardin G."/>
            <person name="Bonnefoy N."/>
        </authorList>
    </citation>
    <scope>FUNCTION</scope>
    <scope>IDENTIFICATION IN THE MRH5C COMPLEX</scope>
    <scope>SUBUNIT</scope>
    <scope>SUBCELLULAR LOCATION</scope>
    <scope>DISRUPTION PHENOTYPE</scope>
    <scope>MUTAGENESIS OF GLY-230</scope>
</reference>
<reference key="5">
    <citation type="journal article" date="2024" name="J. Biol. Chem.">
        <title>Sls1 and Mtf2 mediate the assembly of the Mrh5C complex required for activation of cox1 mRNA translation.</title>
        <authorList>
            <person name="Wang Y."/>
            <person name="Jin T."/>
            <person name="Huang Y."/>
        </authorList>
    </citation>
    <scope>FUNCTION</scope>
    <scope>IDENTIFICATION IN THE MRH5C COMPLEX</scope>
    <scope>SUBUNIT</scope>
    <scope>DISRUPTION PHENOTYPE</scope>
    <scope>MUTAGENESIS OF ASP-261 AND GLU-262</scope>
</reference>
<gene>
    <name evidence="7" type="primary">mrh5</name>
    <name evidence="7" type="ORF">SPBC25D12.06</name>
</gene>
<organism>
    <name type="scientific">Schizosaccharomyces pombe (strain 972 / ATCC 24843)</name>
    <name type="common">Fission yeast</name>
    <dbReference type="NCBI Taxonomy" id="284812"/>
    <lineage>
        <taxon>Eukaryota</taxon>
        <taxon>Fungi</taxon>
        <taxon>Dikarya</taxon>
        <taxon>Ascomycota</taxon>
        <taxon>Taphrinomycotina</taxon>
        <taxon>Schizosaccharomycetes</taxon>
        <taxon>Schizosaccharomycetales</taxon>
        <taxon>Schizosaccharomycetaceae</taxon>
        <taxon>Schizosaccharomyces</taxon>
    </lineage>
</organism>
<sequence>MKCCPASILDRFNAIKVINVMGLRLNGRSVPWLLQTRKFINITSPRYTAGRPVILNENQLIRYLPNYTNKGDEEVTRRKKLHEPNGPKFHELPLNQNILDGLSTNFAEYKNSTPLQQRIINALMKSGVSFIVRGWNGSGKSFGAMLSTLSMYFEALKFLKHNPVAGKPVQSGCQVLFIVPNDNLAAQYQFWIERLLHGITEKEELQHIYKILTLTPASLDSFQNRPPYIGITTFPNLQHCIKKNQPILKQFTSQLQLLIVDESDLVIPDHGRSRRLSSPEILADKIFLSSFIQLCKKNLRINMDDENVGGMGIHSQLHGKGSIPTMVFMSASNSKNGVNYLSRYITDQLGIIGIDRKHQWYWNLTSTPSVFHYLIKAQAEPKTTKVTLTNLPYEFVRFNNSMHSIGDNNFSYNNSEAVLQIFAQSVPRILNIEAKKSKLENNILKCVMIVLPKEFNPHSFCNQYKGFAVGNRFWQCRTLSTESLNFSTNLNNVVFVANPSEIRGLHLPSITHIFHLWSTFSGVAYQHIAGRLGAMGQTGKIFNFIIPDYYKSNDFKKTDFRRCILFMLQRVGIRPKSYEFDDEHF</sequence>